<accession>Q91N56</accession>
<dbReference type="EMBL" id="AF317128">
    <property type="protein sequence ID" value="AAK60609.1"/>
    <property type="molecule type" value="mRNA"/>
</dbReference>
<dbReference type="SMR" id="Q91N56"/>
<dbReference type="GO" id="GO:0019031">
    <property type="term" value="C:viral envelope"/>
    <property type="evidence" value="ECO:0007669"/>
    <property type="project" value="UniProtKB-UniRule"/>
</dbReference>
<dbReference type="GO" id="GO:0039626">
    <property type="term" value="C:viral intermediate capsid"/>
    <property type="evidence" value="ECO:0007669"/>
    <property type="project" value="UniProtKB-UniRule"/>
</dbReference>
<dbReference type="GO" id="GO:0046789">
    <property type="term" value="F:host cell surface receptor binding"/>
    <property type="evidence" value="ECO:0007669"/>
    <property type="project" value="UniProtKB-UniRule"/>
</dbReference>
<dbReference type="GO" id="GO:0046872">
    <property type="term" value="F:metal ion binding"/>
    <property type="evidence" value="ECO:0007669"/>
    <property type="project" value="UniProtKB-UniRule"/>
</dbReference>
<dbReference type="GO" id="GO:0005198">
    <property type="term" value="F:structural molecule activity"/>
    <property type="evidence" value="ECO:0007669"/>
    <property type="project" value="UniProtKB-UniRule"/>
</dbReference>
<dbReference type="GO" id="GO:0019064">
    <property type="term" value="P:fusion of virus membrane with host plasma membrane"/>
    <property type="evidence" value="ECO:0007669"/>
    <property type="project" value="UniProtKB-UniRule"/>
</dbReference>
<dbReference type="FunFam" id="2.60.120.170:FF:000001">
    <property type="entry name" value="Intermediate capsid protein VP6"/>
    <property type="match status" value="1"/>
</dbReference>
<dbReference type="Gene3D" id="2.60.120.170">
    <property type="match status" value="1"/>
</dbReference>
<dbReference type="Gene3D" id="1.10.1350.10">
    <property type="entry name" value="Viral capsid alpha domain"/>
    <property type="match status" value="1"/>
</dbReference>
<dbReference type="HAMAP" id="MF_04126">
    <property type="entry name" value="Rota_VP6"/>
    <property type="match status" value="1"/>
</dbReference>
<dbReference type="HAMAP" id="MF_04129">
    <property type="entry name" value="Rota_VP6_A"/>
    <property type="match status" value="1"/>
</dbReference>
<dbReference type="InterPro" id="IPR008980">
    <property type="entry name" value="Capsid_hemagglutn"/>
</dbReference>
<dbReference type="InterPro" id="IPR001385">
    <property type="entry name" value="Rotavirus_A/C_VP6"/>
</dbReference>
<dbReference type="InterPro" id="IPR008935">
    <property type="entry name" value="Virus_capsid_a-hlx_vir"/>
</dbReference>
<dbReference type="Pfam" id="PF00980">
    <property type="entry name" value="Rota_Capsid_VP6"/>
    <property type="match status" value="1"/>
</dbReference>
<dbReference type="SUPFAM" id="SSF48345">
    <property type="entry name" value="A virus capsid protein alpha-helical domain"/>
    <property type="match status" value="1"/>
</dbReference>
<dbReference type="SUPFAM" id="SSF49818">
    <property type="entry name" value="Viral protein domain"/>
    <property type="match status" value="1"/>
</dbReference>
<proteinExistence type="evidence at transcript level"/>
<reference key="1">
    <citation type="submission" date="2000-10" db="EMBL/GenBank/DDBJ databases">
        <title>Antigenic and molecular analysis of group A porcine and bovine rotaviruses isolated in the United States, Venezuela, and South Africa.</title>
        <authorList>
            <person name="Ciarlet M."/>
            <person name="Steele A.D."/>
            <person name="Vasquez E."/>
            <person name="Bertolotti-Ciarlet A."/>
            <person name="Sanchez-Camacho A."/>
            <person name="Pina C.I."/>
            <person name="Pujol F.H."/>
            <person name="Liprandi F."/>
        </authorList>
    </citation>
    <scope>NUCLEOTIDE SEQUENCE [MRNA]</scope>
</reference>
<organismHost>
    <name type="scientific">Bos taurus</name>
    <name type="common">Bovine</name>
    <dbReference type="NCBI Taxonomy" id="9913"/>
</organismHost>
<sequence>MDVLYSLSKTLKDARDKIVEGTLYSNVSDLIQQFNQMIITMNGNEFQTGGIGNLPIRNWNFDFGLLGTTLLNLDANYVETARNTIDYFVDFVDNVCMDEMVRESQRNGIAPQSDSLRKLSGIKFKRINFDATSEIIENWNLQNRRQRTGFIFHKPNIFPYSASFTLNRSQPAHDNLMGTMWLNAGSEIQVAGFDYSCAINAPANTQQFEHIVQLRRVLTTATITLLPDAERFSFPRVITSADGATTWYFNPVILRPANVEVEFLLNGQVVNTYQAKFGTIIARNFDTIRLSFQLMRPPNMTPAVAALFPNAQPFEFHATVGLTLRIESAVCESVLADANETMLANVTAVRQEYAIPIGPVFPPGMNWTDLITNYSPSREDNLQRVFTVASIRSMLVK</sequence>
<comment type="function">
    <text evidence="1">Intermediate capsid protein that self assembles to form an icosahedral capsid with a T=13 symmetry, which consists of 230 trimers of VP6, with channels at each of its five-fold vertices. This capsid constitutes the middle concentric layer of the viral mature particle. The innermost VP2 capsid and the intermediate VP6 capsid remain intact following cell entry to protect the dsRNA from degradation and to prevent unfavorable antiviral responses in the host cell during all the replication cycle of the virus. Nascent transcripts are transcribed within the structural confines of this double-layered particle (DLP) and are extruded through the channels at the five-fold axes. VP6 is required for the transcription activity of the DLP.</text>
</comment>
<comment type="subunit">
    <text evidence="1">Homotrimer. Interacts with the inner capsid protein VP2. Interacts with the outer capsid glycoprotein VP7. Interacts with the outer capsid protein VP5*.</text>
</comment>
<comment type="subcellular location">
    <subcellularLocation>
        <location evidence="1">Virion</location>
    </subcellularLocation>
    <text evidence="1">Component of the intermediate capsid. Also found in spherical cytoplasmic structures, called virus factories, that appear early after infection and are the site of viral replication and packaging.</text>
</comment>
<comment type="PTM">
    <text evidence="1">The N-terminus is blocked.</text>
</comment>
<comment type="PTM">
    <text evidence="1">Sumoylated with SUMO1 and SUMO2. Sumoylation of viral proteins seems to have a positive role on viral replication.</text>
</comment>
<comment type="miscellaneous">
    <text evidence="1">The VP6 trimer contains a zinc ion located at the center of the molecule. The zinc ion is not essential for either trimerization or transcription activity of the DLP. Zinc-depleted VP6 has an increased sensitivity to proteases.</text>
</comment>
<comment type="similarity">
    <text evidence="1">Belongs to the rotavirus VP6 family.</text>
</comment>
<feature type="chain" id="PRO_0000368160" description="Intermediate capsid protein VP6">
    <location>
        <begin position="1"/>
        <end position="397"/>
    </location>
</feature>
<feature type="region of interest" description="Interaction with the inner capsid protein VP2" evidence="1">
    <location>
        <begin position="62"/>
        <end position="73"/>
    </location>
</feature>
<feature type="binding site" evidence="1">
    <location>
        <position position="153"/>
    </location>
    <ligand>
        <name>Zn(2+)</name>
        <dbReference type="ChEBI" id="CHEBI:29105"/>
        <note>ligand shared between all trimeric partners</note>
    </ligand>
</feature>
<feature type="binding site" evidence="1">
    <location>
        <position position="266"/>
    </location>
    <ligand>
        <name>Ca(2+)</name>
        <dbReference type="ChEBI" id="CHEBI:29108"/>
    </ligand>
</feature>
<feature type="binding site" evidence="1">
    <location>
        <position position="286"/>
    </location>
    <ligand>
        <name>Ca(2+)</name>
        <dbReference type="ChEBI" id="CHEBI:29108"/>
    </ligand>
</feature>
<protein>
    <recommendedName>
        <fullName evidence="1">Intermediate capsid protein VP6</fullName>
    </recommendedName>
</protein>
<organism>
    <name type="scientific">Rotavirus A (isolate RVA/Cow/United States/B223/1983/G10P8[11])</name>
    <name type="common">RV-A</name>
    <dbReference type="NCBI Taxonomy" id="1835656"/>
    <lineage>
        <taxon>Viruses</taxon>
        <taxon>Riboviria</taxon>
        <taxon>Orthornavirae</taxon>
        <taxon>Duplornaviricota</taxon>
        <taxon>Resentoviricetes</taxon>
        <taxon>Reovirales</taxon>
        <taxon>Sedoreoviridae</taxon>
        <taxon>Rotavirus</taxon>
        <taxon>Rotavirus A</taxon>
    </lineage>
</organism>
<keyword id="KW-0106">Calcium</keyword>
<keyword id="KW-0167">Capsid protein</keyword>
<keyword id="KW-1154">Intermediate capsid protein</keyword>
<keyword id="KW-0479">Metal-binding</keyword>
<keyword id="KW-0832">Ubl conjugation</keyword>
<keyword id="KW-0946">Virion</keyword>
<keyword id="KW-0862">Zinc</keyword>
<name>VP6_ROTBB</name>
<evidence type="ECO:0000255" key="1">
    <source>
        <dbReference type="HAMAP-Rule" id="MF_04129"/>
    </source>
</evidence>